<protein>
    <recommendedName>
        <fullName>Bacteriophytochrome</fullName>
        <ecNumber>2.7.13.3</ecNumber>
    </recommendedName>
    <alternativeName>
        <fullName>Phytochrome-like protein</fullName>
    </alternativeName>
</protein>
<organism>
    <name type="scientific">Deinococcus radiodurans (strain ATCC 13939 / DSM 20539 / JCM 16871 / CCUG 27074 / LMG 4051 / NBRC 15346 / NCIMB 9279 / VKM B-1422 / R1)</name>
    <dbReference type="NCBI Taxonomy" id="243230"/>
    <lineage>
        <taxon>Bacteria</taxon>
        <taxon>Thermotogati</taxon>
        <taxon>Deinococcota</taxon>
        <taxon>Deinococci</taxon>
        <taxon>Deinococcales</taxon>
        <taxon>Deinococcaceae</taxon>
        <taxon>Deinococcus</taxon>
    </lineage>
</organism>
<name>BPHY_DEIRA</name>
<reference key="1">
    <citation type="journal article" date="1999" name="Science">
        <title>Genome sequence of the radioresistant bacterium Deinococcus radiodurans R1.</title>
        <authorList>
            <person name="White O."/>
            <person name="Eisen J.A."/>
            <person name="Heidelberg J.F."/>
            <person name="Hickey E.K."/>
            <person name="Peterson J.D."/>
            <person name="Dodson R.J."/>
            <person name="Haft D.H."/>
            <person name="Gwinn M.L."/>
            <person name="Nelson W.C."/>
            <person name="Richardson D.L."/>
            <person name="Moffat K.S."/>
            <person name="Qin H."/>
            <person name="Jiang L."/>
            <person name="Pamphile W."/>
            <person name="Crosby M."/>
            <person name="Shen M."/>
            <person name="Vamathevan J.J."/>
            <person name="Lam P."/>
            <person name="McDonald L.A."/>
            <person name="Utterback T.R."/>
            <person name="Zalewski C."/>
            <person name="Makarova K.S."/>
            <person name="Aravind L."/>
            <person name="Daly M.J."/>
            <person name="Minton K.W."/>
            <person name="Fleischmann R.D."/>
            <person name="Ketchum K.A."/>
            <person name="Nelson K.E."/>
            <person name="Salzberg S.L."/>
            <person name="Smith H.O."/>
            <person name="Venter J.C."/>
            <person name="Fraser C.M."/>
        </authorList>
    </citation>
    <scope>NUCLEOTIDE SEQUENCE [LARGE SCALE GENOMIC DNA]</scope>
    <source>
        <strain>ATCC 13939 / DSM 20539 / JCM 16871 / CCUG 27074 / LMG 4051 / NBRC 15346 / NCIMB 9279 / VKM B-1422 / R1</strain>
    </source>
</reference>
<reference key="2">
    <citation type="journal article" date="1999" name="Science">
        <title>Bacteriophytochromes: phytochrome-like photoreceptors from nonphotosynthetic eubacteria.</title>
        <authorList>
            <person name="Davis S.J."/>
            <person name="Vener A.V."/>
            <person name="Vierstra R.D."/>
        </authorList>
    </citation>
    <scope>CHARACTERIZATION</scope>
    <scope>MUTAGENESIS OF MET-259; HIS-260 AND CYS-289</scope>
</reference>
<reference key="3">
    <citation type="journal article" date="2005" name="Nature">
        <title>A light-sensing knot revealed by the structure of the chromophore-binding domain of phytochrome.</title>
        <authorList>
            <person name="Wagner J.R."/>
            <person name="Brunzelle J.S."/>
            <person name="Forest K.T."/>
            <person name="Vierstra R.D."/>
        </authorList>
    </citation>
    <scope>X-RAY CRYSTALLOGRAPHY (2.5 ANGSTROMS) OF 1-321</scope>
</reference>
<keyword id="KW-0002">3D-structure</keyword>
<keyword id="KW-0067">ATP-binding</keyword>
<keyword id="KW-0157">Chromophore</keyword>
<keyword id="KW-0418">Kinase</keyword>
<keyword id="KW-0547">Nucleotide-binding</keyword>
<keyword id="KW-0597">Phosphoprotein</keyword>
<keyword id="KW-0600">Photoreceptor protein</keyword>
<keyword id="KW-0675">Receptor</keyword>
<keyword id="KW-1185">Reference proteome</keyword>
<keyword id="KW-0716">Sensory transduction</keyword>
<keyword id="KW-0808">Transferase</keyword>
<gene>
    <name type="primary">bphP</name>
    <name type="ordered locus">DR_A0050</name>
</gene>
<dbReference type="EC" id="2.7.13.3"/>
<dbReference type="EMBL" id="AE001825">
    <property type="protein sequence ID" value="AAF12261.1"/>
    <property type="molecule type" value="Genomic_DNA"/>
</dbReference>
<dbReference type="PIR" id="D75598">
    <property type="entry name" value="D75598"/>
</dbReference>
<dbReference type="RefSeq" id="NP_285374.1">
    <property type="nucleotide sequence ID" value="NC_001264.1"/>
</dbReference>
<dbReference type="RefSeq" id="WP_010889310.1">
    <property type="nucleotide sequence ID" value="NC_001264.1"/>
</dbReference>
<dbReference type="PDB" id="1ZTU">
    <property type="method" value="X-ray"/>
    <property type="resolution" value="2.50 A"/>
    <property type="chains" value="A=1-321"/>
</dbReference>
<dbReference type="PDB" id="2O9B">
    <property type="method" value="X-ray"/>
    <property type="resolution" value="2.15 A"/>
    <property type="chains" value="A=1-321"/>
</dbReference>
<dbReference type="PDB" id="2O9C">
    <property type="method" value="X-ray"/>
    <property type="resolution" value="1.45 A"/>
    <property type="chains" value="A=1-321"/>
</dbReference>
<dbReference type="PDB" id="3S7N">
    <property type="method" value="X-ray"/>
    <property type="resolution" value="2.45 A"/>
    <property type="chains" value="A=1-321"/>
</dbReference>
<dbReference type="PDB" id="3S7O">
    <property type="method" value="X-ray"/>
    <property type="resolution" value="1.24 A"/>
    <property type="chains" value="A=1-321"/>
</dbReference>
<dbReference type="PDB" id="3S7P">
    <property type="method" value="X-ray"/>
    <property type="resolution" value="1.72 A"/>
    <property type="chains" value="A=1-321"/>
</dbReference>
<dbReference type="PDB" id="3S7Q">
    <property type="method" value="X-ray"/>
    <property type="resolution" value="1.75 A"/>
    <property type="chains" value="A=1-321"/>
</dbReference>
<dbReference type="PDB" id="4CQH">
    <property type="method" value="X-ray"/>
    <property type="resolution" value="1.14 A"/>
    <property type="chains" value="A=1-317"/>
</dbReference>
<dbReference type="PDB" id="4IJG">
    <property type="method" value="X-ray"/>
    <property type="resolution" value="1.70 A"/>
    <property type="chains" value="A=7-321"/>
</dbReference>
<dbReference type="PDB" id="4O01">
    <property type="method" value="X-ray"/>
    <property type="resolution" value="3.24 A"/>
    <property type="chains" value="A/B/C/D=1-502"/>
</dbReference>
<dbReference type="PDB" id="4O0P">
    <property type="method" value="X-ray"/>
    <property type="resolution" value="3.80 A"/>
    <property type="chains" value="A/B=1-502"/>
</dbReference>
<dbReference type="PDB" id="4O8G">
    <property type="method" value="X-ray"/>
    <property type="resolution" value="1.65 A"/>
    <property type="chains" value="A=1-321"/>
</dbReference>
<dbReference type="PDB" id="4Q0H">
    <property type="method" value="X-ray"/>
    <property type="resolution" value="1.16 A"/>
    <property type="chains" value="A=1-321"/>
</dbReference>
<dbReference type="PDB" id="4Q0I">
    <property type="method" value="X-ray"/>
    <property type="resolution" value="1.74 A"/>
    <property type="chains" value="A=1-321"/>
</dbReference>
<dbReference type="PDB" id="4Q0J">
    <property type="method" value="X-ray"/>
    <property type="resolution" value="2.75 A"/>
    <property type="chains" value="A=1-502"/>
</dbReference>
<dbReference type="PDB" id="4Y3I">
    <property type="method" value="X-ray"/>
    <property type="resolution" value="1.69 A"/>
    <property type="chains" value="A=4-321"/>
</dbReference>
<dbReference type="PDB" id="4Y5F">
    <property type="method" value="X-ray"/>
    <property type="resolution" value="1.70 A"/>
    <property type="chains" value="A=4-321"/>
</dbReference>
<dbReference type="PDB" id="4Z1W">
    <property type="method" value="X-ray"/>
    <property type="resolution" value="1.30 A"/>
    <property type="chains" value="A=1-321"/>
</dbReference>
<dbReference type="PDB" id="4ZRR">
    <property type="method" value="X-ray"/>
    <property type="resolution" value="1.50 A"/>
    <property type="chains" value="A=1-321"/>
</dbReference>
<dbReference type="PDB" id="5AJG">
    <property type="method" value="X-ray"/>
    <property type="resolution" value="1.11 A"/>
    <property type="chains" value="A=1-321"/>
</dbReference>
<dbReference type="PDB" id="5C5K">
    <property type="method" value="X-ray"/>
    <property type="resolution" value="3.31 A"/>
    <property type="chains" value="A/B/C/D=1-502"/>
</dbReference>
<dbReference type="PDB" id="5K5B">
    <property type="method" value="X-ray"/>
    <property type="resolution" value="1.35 A"/>
    <property type="chains" value="A=1-321"/>
</dbReference>
<dbReference type="PDB" id="5L8M">
    <property type="method" value="X-ray"/>
    <property type="resolution" value="2.10 A"/>
    <property type="chains" value="A=1-321"/>
</dbReference>
<dbReference type="PDB" id="5LBR">
    <property type="method" value="X-ray"/>
    <property type="resolution" value="2.20 A"/>
    <property type="chains" value="A=1-321"/>
</dbReference>
<dbReference type="PDB" id="5MG0">
    <property type="method" value="X-ray"/>
    <property type="resolution" value="1.65 A"/>
    <property type="chains" value="A=1-321"/>
</dbReference>
<dbReference type="PDB" id="5MG1">
    <property type="method" value="X-ray"/>
    <property type="resolution" value="3.30 A"/>
    <property type="chains" value="A=1-502"/>
</dbReference>
<dbReference type="PDB" id="5NFX">
    <property type="method" value="X-ray"/>
    <property type="resolution" value="1.34 A"/>
    <property type="chains" value="A=1-321"/>
</dbReference>
<dbReference type="PDB" id="5NM3">
    <property type="method" value="X-ray"/>
    <property type="resolution" value="3.30 A"/>
    <property type="chains" value="A/B/C/D=1-502"/>
</dbReference>
<dbReference type="PDB" id="5NWN">
    <property type="method" value="X-ray"/>
    <property type="resolution" value="3.60 A"/>
    <property type="chains" value="A/B/C/D=1-502"/>
</dbReference>
<dbReference type="PDB" id="6FHT">
    <property type="method" value="X-ray"/>
    <property type="resolution" value="2.35 A"/>
    <property type="chains" value="A/B=3-510"/>
</dbReference>
<dbReference type="PDB" id="6FTD">
    <property type="method" value="X-ray"/>
    <property type="resolution" value="1.40 A"/>
    <property type="chains" value="A/B=1-321"/>
</dbReference>
<dbReference type="PDB" id="6T3L">
    <property type="method" value="X-ray"/>
    <property type="resolution" value="2.07 A"/>
    <property type="chains" value="A/B=1-321"/>
</dbReference>
<dbReference type="PDB" id="6T3U">
    <property type="method" value="X-ray"/>
    <property type="resolution" value="2.21 A"/>
    <property type="chains" value="A/B=1-321"/>
</dbReference>
<dbReference type="PDB" id="7Z9D">
    <property type="method" value="X-ray"/>
    <property type="resolution" value="1.88 A"/>
    <property type="chains" value="A=1-321"/>
</dbReference>
<dbReference type="PDB" id="7Z9E">
    <property type="method" value="X-ray"/>
    <property type="resolution" value="1.48 A"/>
    <property type="chains" value="A=1-321"/>
</dbReference>
<dbReference type="PDB" id="8AVV">
    <property type="method" value="EM"/>
    <property type="resolution" value="3.40 A"/>
    <property type="chains" value="A/B=1-755"/>
</dbReference>
<dbReference type="PDB" id="8AVW">
    <property type="method" value="EM"/>
    <property type="resolution" value="3.62 A"/>
    <property type="chains" value="A/B=1-755"/>
</dbReference>
<dbReference type="PDB" id="8AVX">
    <property type="method" value="EM"/>
    <property type="resolution" value="3.50 A"/>
    <property type="chains" value="A/B=1-755"/>
</dbReference>
<dbReference type="PDB" id="8BOR">
    <property type="method" value="X-ray"/>
    <property type="resolution" value="2.30 A"/>
    <property type="chains" value="A/B/C/D=1-446, A/B/C/D=478-502"/>
</dbReference>
<dbReference type="PDB" id="8C3I">
    <property type="method" value="X-ray"/>
    <property type="resolution" value="2.10 A"/>
    <property type="chains" value="A/B=1-321"/>
</dbReference>
<dbReference type="PDB" id="8SGK">
    <property type="method" value="EM"/>
    <property type="resolution" value="3.70 A"/>
    <property type="chains" value="A/B=1-755"/>
</dbReference>
<dbReference type="PDBsum" id="1ZTU"/>
<dbReference type="PDBsum" id="2O9B"/>
<dbReference type="PDBsum" id="2O9C"/>
<dbReference type="PDBsum" id="3S7N"/>
<dbReference type="PDBsum" id="3S7O"/>
<dbReference type="PDBsum" id="3S7P"/>
<dbReference type="PDBsum" id="3S7Q"/>
<dbReference type="PDBsum" id="4CQH"/>
<dbReference type="PDBsum" id="4IJG"/>
<dbReference type="PDBsum" id="4O01"/>
<dbReference type="PDBsum" id="4O0P"/>
<dbReference type="PDBsum" id="4O8G"/>
<dbReference type="PDBsum" id="4Q0H"/>
<dbReference type="PDBsum" id="4Q0I"/>
<dbReference type="PDBsum" id="4Q0J"/>
<dbReference type="PDBsum" id="4Y3I"/>
<dbReference type="PDBsum" id="4Y5F"/>
<dbReference type="PDBsum" id="4Z1W"/>
<dbReference type="PDBsum" id="4ZRR"/>
<dbReference type="PDBsum" id="5AJG"/>
<dbReference type="PDBsum" id="5C5K"/>
<dbReference type="PDBsum" id="5K5B"/>
<dbReference type="PDBsum" id="5L8M"/>
<dbReference type="PDBsum" id="5LBR"/>
<dbReference type="PDBsum" id="5MG0"/>
<dbReference type="PDBsum" id="5MG1"/>
<dbReference type="PDBsum" id="5NFX"/>
<dbReference type="PDBsum" id="5NM3"/>
<dbReference type="PDBsum" id="5NWN"/>
<dbReference type="PDBsum" id="6FHT"/>
<dbReference type="PDBsum" id="6FTD"/>
<dbReference type="PDBsum" id="6T3L"/>
<dbReference type="PDBsum" id="6T3U"/>
<dbReference type="PDBsum" id="7Z9D"/>
<dbReference type="PDBsum" id="7Z9E"/>
<dbReference type="PDBsum" id="8AVV"/>
<dbReference type="PDBsum" id="8AVW"/>
<dbReference type="PDBsum" id="8AVX"/>
<dbReference type="PDBsum" id="8BOR"/>
<dbReference type="PDBsum" id="8C3I"/>
<dbReference type="PDBsum" id="8SGK"/>
<dbReference type="EMDB" id="EMD-40458"/>
<dbReference type="SMR" id="Q9RZA4"/>
<dbReference type="DIP" id="DIP-59338N"/>
<dbReference type="STRING" id="243230.DR_A0050"/>
<dbReference type="PaxDb" id="243230-DR_A0050"/>
<dbReference type="EnsemblBacteria" id="AAF12261">
    <property type="protein sequence ID" value="AAF12261"/>
    <property type="gene ID" value="DR_A0050"/>
</dbReference>
<dbReference type="GeneID" id="69518942"/>
<dbReference type="KEGG" id="dra:DR_A0050"/>
<dbReference type="PATRIC" id="fig|243230.17.peg.2934"/>
<dbReference type="eggNOG" id="COG4251">
    <property type="taxonomic scope" value="Bacteria"/>
</dbReference>
<dbReference type="HOGENOM" id="CLU_000445_50_1_0"/>
<dbReference type="InParanoid" id="Q9RZA4"/>
<dbReference type="OrthoDB" id="9766459at2"/>
<dbReference type="BRENDA" id="2.7.13.3">
    <property type="organism ID" value="1856"/>
</dbReference>
<dbReference type="EvolutionaryTrace" id="Q9RZA4"/>
<dbReference type="Proteomes" id="UP000002524">
    <property type="component" value="Chromosome 2"/>
</dbReference>
<dbReference type="GO" id="GO:0005524">
    <property type="term" value="F:ATP binding"/>
    <property type="evidence" value="ECO:0007669"/>
    <property type="project" value="UniProtKB-KW"/>
</dbReference>
<dbReference type="GO" id="GO:0042802">
    <property type="term" value="F:identical protein binding"/>
    <property type="evidence" value="ECO:0000353"/>
    <property type="project" value="IntAct"/>
</dbReference>
<dbReference type="GO" id="GO:0000156">
    <property type="term" value="F:phosphorelay response regulator activity"/>
    <property type="evidence" value="ECO:0000318"/>
    <property type="project" value="GO_Central"/>
</dbReference>
<dbReference type="GO" id="GO:0000155">
    <property type="term" value="F:phosphorelay sensor kinase activity"/>
    <property type="evidence" value="ECO:0007669"/>
    <property type="project" value="InterPro"/>
</dbReference>
<dbReference type="GO" id="GO:0009881">
    <property type="term" value="F:photoreceptor activity"/>
    <property type="evidence" value="ECO:0007669"/>
    <property type="project" value="UniProtKB-KW"/>
</dbReference>
<dbReference type="GO" id="GO:0030295">
    <property type="term" value="F:protein kinase activator activity"/>
    <property type="evidence" value="ECO:0000318"/>
    <property type="project" value="GO_Central"/>
</dbReference>
<dbReference type="GO" id="GO:0009584">
    <property type="term" value="P:detection of visible light"/>
    <property type="evidence" value="ECO:0007669"/>
    <property type="project" value="InterPro"/>
</dbReference>
<dbReference type="GO" id="GO:0007234">
    <property type="term" value="P:osmosensory signaling via phosphorelay pathway"/>
    <property type="evidence" value="ECO:0000318"/>
    <property type="project" value="GO_Central"/>
</dbReference>
<dbReference type="GO" id="GO:0006355">
    <property type="term" value="P:regulation of DNA-templated transcription"/>
    <property type="evidence" value="ECO:0007669"/>
    <property type="project" value="InterPro"/>
</dbReference>
<dbReference type="Gene3D" id="3.30.450.270">
    <property type="match status" value="1"/>
</dbReference>
<dbReference type="Gene3D" id="3.30.450.40">
    <property type="match status" value="1"/>
</dbReference>
<dbReference type="Gene3D" id="3.30.565.10">
    <property type="entry name" value="Histidine kinase-like ATPase, C-terminal domain"/>
    <property type="match status" value="1"/>
</dbReference>
<dbReference type="Gene3D" id="3.30.450.20">
    <property type="entry name" value="PAS domain"/>
    <property type="match status" value="1"/>
</dbReference>
<dbReference type="InterPro" id="IPR003018">
    <property type="entry name" value="GAF"/>
</dbReference>
<dbReference type="InterPro" id="IPR029016">
    <property type="entry name" value="GAF-like_dom_sf"/>
</dbReference>
<dbReference type="InterPro" id="IPR036890">
    <property type="entry name" value="HATPase_C_sf"/>
</dbReference>
<dbReference type="InterPro" id="IPR005467">
    <property type="entry name" value="His_kinase_dom"/>
</dbReference>
<dbReference type="InterPro" id="IPR036097">
    <property type="entry name" value="HisK_dim/P_sf"/>
</dbReference>
<dbReference type="InterPro" id="IPR052545">
    <property type="entry name" value="Light-responsive_reg"/>
</dbReference>
<dbReference type="InterPro" id="IPR035965">
    <property type="entry name" value="PAS-like_dom_sf"/>
</dbReference>
<dbReference type="InterPro" id="IPR013654">
    <property type="entry name" value="PAS_2"/>
</dbReference>
<dbReference type="InterPro" id="IPR016132">
    <property type="entry name" value="Phyto_chromo_attachment"/>
</dbReference>
<dbReference type="InterPro" id="IPR013515">
    <property type="entry name" value="Phytochrome_cen-reg"/>
</dbReference>
<dbReference type="InterPro" id="IPR043150">
    <property type="entry name" value="Phytochrome_PHY_sf"/>
</dbReference>
<dbReference type="InterPro" id="IPR004358">
    <property type="entry name" value="Sig_transdc_His_kin-like_C"/>
</dbReference>
<dbReference type="PANTHER" id="PTHR42878:SF15">
    <property type="entry name" value="BACTERIOPHYTOCHROME"/>
    <property type="match status" value="1"/>
</dbReference>
<dbReference type="PANTHER" id="PTHR42878">
    <property type="entry name" value="TWO-COMPONENT HISTIDINE KINASE"/>
    <property type="match status" value="1"/>
</dbReference>
<dbReference type="Pfam" id="PF01590">
    <property type="entry name" value="GAF"/>
    <property type="match status" value="1"/>
</dbReference>
<dbReference type="Pfam" id="PF02518">
    <property type="entry name" value="HATPase_c"/>
    <property type="match status" value="1"/>
</dbReference>
<dbReference type="Pfam" id="PF08446">
    <property type="entry name" value="PAS_2"/>
    <property type="match status" value="1"/>
</dbReference>
<dbReference type="Pfam" id="PF00360">
    <property type="entry name" value="PHY"/>
    <property type="match status" value="1"/>
</dbReference>
<dbReference type="PRINTS" id="PR00344">
    <property type="entry name" value="BCTRLSENSOR"/>
</dbReference>
<dbReference type="SMART" id="SM00065">
    <property type="entry name" value="GAF"/>
    <property type="match status" value="1"/>
</dbReference>
<dbReference type="SMART" id="SM00387">
    <property type="entry name" value="HATPase_c"/>
    <property type="match status" value="1"/>
</dbReference>
<dbReference type="SUPFAM" id="SSF55874">
    <property type="entry name" value="ATPase domain of HSP90 chaperone/DNA topoisomerase II/histidine kinase"/>
    <property type="match status" value="1"/>
</dbReference>
<dbReference type="SUPFAM" id="SSF55781">
    <property type="entry name" value="GAF domain-like"/>
    <property type="match status" value="2"/>
</dbReference>
<dbReference type="SUPFAM" id="SSF47384">
    <property type="entry name" value="Homodimeric domain of signal transducing histidine kinase"/>
    <property type="match status" value="1"/>
</dbReference>
<dbReference type="SUPFAM" id="SSF55785">
    <property type="entry name" value="PYP-like sensor domain (PAS domain)"/>
    <property type="match status" value="1"/>
</dbReference>
<dbReference type="PROSITE" id="PS50109">
    <property type="entry name" value="HIS_KIN"/>
    <property type="match status" value="1"/>
</dbReference>
<dbReference type="PROSITE" id="PS50046">
    <property type="entry name" value="PHYTOCHROME_2"/>
    <property type="match status" value="1"/>
</dbReference>
<proteinExistence type="evidence at protein level"/>
<comment type="function">
    <text>Photoreceptor which exists in two forms that are reversibly interconvertible by light: the R form that absorbs maximally in the red region of the spectrum and the FR form that absorbs maximally in the far-red region. Also has a slight blue shift for the far-red maximum. Could also absorb green light. May participate in regulating pigment synthesis like the carotenoid deinoxanthin which could protect the bacterium from intense visible light.</text>
</comment>
<comment type="catalytic activity">
    <reaction>
        <text>ATP + protein L-histidine = ADP + protein N-phospho-L-histidine.</text>
        <dbReference type="EC" id="2.7.13.3"/>
    </reaction>
</comment>
<comment type="interaction">
    <interactant intactId="EBI-15858311">
        <id>Q9RZA4</id>
    </interactant>
    <interactant intactId="EBI-15858311">
        <id>Q9RZA4</id>
        <label>bphP</label>
    </interactant>
    <organismsDiffer>false</organismsDiffer>
    <experiments>7</experiments>
</comment>
<comment type="PTM">
    <text>Contains one covalently linked tetrapyrrole chromophore. Lacks the cysteine conserved in plant phytochromes (at the position of Met-259) that binds chromophore. An engineered sequence used for X-ray crystallography forms a thioether link to biliverdin through Cys-24. The natural sequence can bind phycocyanobilin and phytochromobilin in vitro, but the identity of the natural chromophore is unknown.</text>
</comment>
<comment type="similarity">
    <text evidence="3">In the N-terminal section; belongs to the phytochrome family.</text>
</comment>
<accession>Q9RZA4</accession>
<sequence length="755" mass="81585">MSRDPLPFFPPLYLGGPEITTENCEREPIHIPGSIQPHGALLTADGHSGEVLQMSLNAATFLGQEPTVLRGQTLAALLPEQWPALQAALPPGCPDALQYRATLDWPAAGHLSLTVHRVGELLILEFEPTEAWDSTGPHALRNAMFALESAPNLRALAEVATQTVRELTGFDRVMLYKFAPDATGEVIAEARREGLHAFLGHRFPASDIPAQARALYTRHLLRLTADTRAAAVPLDPVLNPQTNAPTPLGGAVLRATSPMHMQYLRNMGVGSSLSVSVVVGGQLWGLIACHHQTPYVLPPDLRTTLEYLGRLLSLQVQVKEAADVAAFRQSLREHHARVALAAAHSLSPHDTLSDPALDLLGLMRAGGLILRFEGRWQTLGEVPPAPAVDALLAWLETQPGALVQTDALGQLWPAGADLAPSAAGLLAISVGEGWSECLVWLRPELRLEVAWGGATPDQAKDDLGPRHSFDTYLEEKRGYAEPWHPGEIEEAQDLRDTLTGALGERLSVIRDLNRALTQSNAEWRQYGFVISHHMQEPVRLISQFAELLTRQPRAQDGSPDSPQTERITGFLLRETSRLRSLTQDLHTYTALLSAPPPVRRPTPLGRVVDDVLQDLEPRIADTGASIEVAPELPVIAADAGLLRDLLLHLIGNALTFGGPEPRIAVRTERQGAGWSIAVSDQGAGIAPEYQERIFLLFQRLGSLDEALGNGLGLPLCRKIAELHGGTLTVESAPGEGSTFRCWLPDAGPLPGAADA</sequence>
<evidence type="ECO:0000255" key="1">
    <source>
        <dbReference type="PROSITE-ProRule" id="PRU00107"/>
    </source>
</evidence>
<evidence type="ECO:0000269" key="2">
    <source>
    </source>
</evidence>
<evidence type="ECO:0000305" key="3"/>
<evidence type="ECO:0007829" key="4">
    <source>
        <dbReference type="PDB" id="1ZTU"/>
    </source>
</evidence>
<evidence type="ECO:0007829" key="5">
    <source>
        <dbReference type="PDB" id="2O9C"/>
    </source>
</evidence>
<evidence type="ECO:0007829" key="6">
    <source>
        <dbReference type="PDB" id="4O01"/>
    </source>
</evidence>
<evidence type="ECO:0007829" key="7">
    <source>
        <dbReference type="PDB" id="4Q0H"/>
    </source>
</evidence>
<evidence type="ECO:0007829" key="8">
    <source>
        <dbReference type="PDB" id="4Z1W"/>
    </source>
</evidence>
<evidence type="ECO:0007829" key="9">
    <source>
        <dbReference type="PDB" id="5AJG"/>
    </source>
</evidence>
<evidence type="ECO:0007829" key="10">
    <source>
        <dbReference type="PDB" id="6FHT"/>
    </source>
</evidence>
<evidence type="ECO:0007829" key="11">
    <source>
        <dbReference type="PDB" id="6T3U"/>
    </source>
</evidence>
<evidence type="ECO:0007829" key="12">
    <source>
        <dbReference type="PDB" id="8AVV"/>
    </source>
</evidence>
<evidence type="ECO:0007829" key="13">
    <source>
        <dbReference type="PDB" id="8AVX"/>
    </source>
</evidence>
<evidence type="ECO:0007829" key="14">
    <source>
        <dbReference type="PDB" id="8BOR"/>
    </source>
</evidence>
<feature type="chain" id="PRO_0000171999" description="Bacteriophytochrome">
    <location>
        <begin position="1"/>
        <end position="755"/>
    </location>
</feature>
<feature type="domain" description="PAS">
    <location>
        <begin position="26"/>
        <end position="94"/>
    </location>
</feature>
<feature type="domain" description="GAF">
    <location>
        <begin position="152"/>
        <end position="316"/>
    </location>
</feature>
<feature type="domain" description="Histidine kinase" evidence="1">
    <location>
        <begin position="529"/>
        <end position="747"/>
    </location>
</feature>
<feature type="region of interest" description="Chromophore binding domain">
    <location>
        <begin position="95"/>
        <end position="504"/>
    </location>
</feature>
<feature type="binding site" description="covalent" evidence="3">
    <location>
        <position position="24"/>
    </location>
    <ligand>
        <name>a tetrapyrrole</name>
        <dbReference type="ChEBI" id="CHEBI:26932"/>
    </ligand>
</feature>
<feature type="modified residue" description="Phosphohistidine; by autocatalysis" evidence="1">
    <location>
        <position position="532"/>
    </location>
</feature>
<feature type="mutagenesis site" description="Binds PCB (in vitro), but difference spectrum is altered." evidence="2">
    <original>M</original>
    <variation>A</variation>
    <location>
        <position position="259"/>
    </location>
</feature>
<feature type="mutagenesis site" description="Binds PCB (in vitro), but difference spectrum is altered." evidence="2">
    <original>M</original>
    <variation>C</variation>
    <location>
        <position position="259"/>
    </location>
</feature>
<feature type="mutagenesis site" description="100-fold reduction of chromophore-binding activity." evidence="2">
    <original>H</original>
    <variation>A</variation>
    <location>
        <position position="260"/>
    </location>
</feature>
<feature type="mutagenesis site" description="Binds PCB (in vitro), but has aberrant spectral properties." evidence="2">
    <original>C</original>
    <variation>A</variation>
    <location>
        <position position="289"/>
    </location>
</feature>
<feature type="strand" evidence="7">
    <location>
        <begin position="1"/>
        <end position="3"/>
    </location>
</feature>
<feature type="helix" evidence="9">
    <location>
        <begin position="12"/>
        <end position="14"/>
    </location>
</feature>
<feature type="turn" evidence="7">
    <location>
        <begin position="21"/>
        <end position="23"/>
    </location>
</feature>
<feature type="helix" evidence="9">
    <location>
        <begin position="24"/>
        <end position="26"/>
    </location>
</feature>
<feature type="strand" evidence="9">
    <location>
        <begin position="33"/>
        <end position="35"/>
    </location>
</feature>
<feature type="strand" evidence="9">
    <location>
        <begin position="39"/>
        <end position="45"/>
    </location>
</feature>
<feature type="turn" evidence="9">
    <location>
        <begin position="46"/>
        <end position="48"/>
    </location>
</feature>
<feature type="strand" evidence="9">
    <location>
        <begin position="50"/>
        <end position="55"/>
    </location>
</feature>
<feature type="helix" evidence="9">
    <location>
        <begin position="58"/>
        <end position="62"/>
    </location>
</feature>
<feature type="helix" evidence="9">
    <location>
        <begin position="66"/>
        <end position="69"/>
    </location>
</feature>
<feature type="strand" evidence="4">
    <location>
        <begin position="70"/>
        <end position="73"/>
    </location>
</feature>
<feature type="helix" evidence="9">
    <location>
        <begin position="74"/>
        <end position="77"/>
    </location>
</feature>
<feature type="helix" evidence="9">
    <location>
        <begin position="81"/>
        <end position="88"/>
    </location>
</feature>
<feature type="strand" evidence="9">
    <location>
        <begin position="99"/>
        <end position="103"/>
    </location>
</feature>
<feature type="strand" evidence="8">
    <location>
        <begin position="107"/>
        <end position="109"/>
    </location>
</feature>
<feature type="strand" evidence="9">
    <location>
        <begin position="110"/>
        <end position="118"/>
    </location>
</feature>
<feature type="strand" evidence="9">
    <location>
        <begin position="121"/>
        <end position="129"/>
    </location>
</feature>
<feature type="helix" evidence="5">
    <location>
        <begin position="131"/>
        <end position="133"/>
    </location>
</feature>
<feature type="helix" evidence="9">
    <location>
        <begin position="139"/>
        <end position="149"/>
    </location>
</feature>
<feature type="helix" evidence="9">
    <location>
        <begin position="153"/>
        <end position="168"/>
    </location>
</feature>
<feature type="strand" evidence="9">
    <location>
        <begin position="171"/>
        <end position="178"/>
    </location>
</feature>
<feature type="turn" evidence="13">
    <location>
        <begin position="180"/>
        <end position="182"/>
    </location>
</feature>
<feature type="strand" evidence="9">
    <location>
        <begin position="184"/>
        <end position="191"/>
    </location>
</feature>
<feature type="strand" evidence="6">
    <location>
        <begin position="193"/>
        <end position="195"/>
    </location>
</feature>
<feature type="helix" evidence="9">
    <location>
        <begin position="205"/>
        <end position="207"/>
    </location>
</feature>
<feature type="helix" evidence="9">
    <location>
        <begin position="210"/>
        <end position="218"/>
    </location>
</feature>
<feature type="strand" evidence="9">
    <location>
        <begin position="221"/>
        <end position="225"/>
    </location>
</feature>
<feature type="strand" evidence="9">
    <location>
        <begin position="232"/>
        <end position="238"/>
    </location>
</feature>
<feature type="turn" evidence="9">
    <location>
        <begin position="240"/>
        <end position="242"/>
    </location>
</feature>
<feature type="strand" evidence="9">
    <location>
        <begin position="243"/>
        <end position="245"/>
    </location>
</feature>
<feature type="strand" evidence="11">
    <location>
        <begin position="252"/>
        <end position="254"/>
    </location>
</feature>
<feature type="helix" evidence="9">
    <location>
        <begin position="258"/>
        <end position="266"/>
    </location>
</feature>
<feature type="strand" evidence="9">
    <location>
        <begin position="270"/>
        <end position="279"/>
    </location>
</feature>
<feature type="strand" evidence="9">
    <location>
        <begin position="282"/>
        <end position="293"/>
    </location>
</feature>
<feature type="helix" evidence="9">
    <location>
        <begin position="299"/>
        <end position="320"/>
    </location>
</feature>
<feature type="turn" evidence="12">
    <location>
        <begin position="328"/>
        <end position="330"/>
    </location>
</feature>
<feature type="helix" evidence="10">
    <location>
        <begin position="332"/>
        <end position="344"/>
    </location>
</feature>
<feature type="helix" evidence="14">
    <location>
        <begin position="348"/>
        <end position="352"/>
    </location>
</feature>
<feature type="turn" evidence="14">
    <location>
        <begin position="355"/>
        <end position="357"/>
    </location>
</feature>
<feature type="helix" evidence="14">
    <location>
        <begin position="359"/>
        <end position="362"/>
    </location>
</feature>
<feature type="strand" evidence="14">
    <location>
        <begin position="366"/>
        <end position="372"/>
    </location>
</feature>
<feature type="strand" evidence="14">
    <location>
        <begin position="375"/>
        <end position="381"/>
    </location>
</feature>
<feature type="helix" evidence="14">
    <location>
        <begin position="385"/>
        <end position="396"/>
    </location>
</feature>
<feature type="strand" evidence="14">
    <location>
        <begin position="400"/>
        <end position="406"/>
    </location>
</feature>
<feature type="helix" evidence="14">
    <location>
        <begin position="408"/>
        <end position="411"/>
    </location>
</feature>
<feature type="helix" evidence="10">
    <location>
        <begin position="415"/>
        <end position="418"/>
    </location>
</feature>
<feature type="helix" evidence="14">
    <location>
        <begin position="419"/>
        <end position="422"/>
    </location>
</feature>
<feature type="strand" evidence="14">
    <location>
        <begin position="423"/>
        <end position="432"/>
    </location>
</feature>
<feature type="strand" evidence="14">
    <location>
        <begin position="435"/>
        <end position="442"/>
    </location>
</feature>
<feature type="strand" evidence="10">
    <location>
        <begin position="447"/>
        <end position="453"/>
    </location>
</feature>
<feature type="helix" evidence="10">
    <location>
        <begin position="456"/>
        <end position="458"/>
    </location>
</feature>
<feature type="strand" evidence="10">
    <location>
        <begin position="461"/>
        <end position="464"/>
    </location>
</feature>
<feature type="strand" evidence="10">
    <location>
        <begin position="470"/>
        <end position="476"/>
    </location>
</feature>
<feature type="strand" evidence="13">
    <location>
        <begin position="477"/>
        <end position="479"/>
    </location>
</feature>
<feature type="helix" evidence="14">
    <location>
        <begin position="485"/>
        <end position="501"/>
    </location>
</feature>
<feature type="helix" evidence="10">
    <location>
        <begin position="502"/>
        <end position="510"/>
    </location>
</feature>